<reference key="1">
    <citation type="submission" date="2001-03" db="EMBL/GenBank/DDBJ databases">
        <title>Cloning an characterization of the porcine homologous to human chemokine MIP-1beta.</title>
        <authorList>
            <person name="Ortuno E."/>
            <person name="Rodriguez-Carreno M.P."/>
            <person name="Alonso F."/>
            <person name="Dominguez J."/>
            <person name="Ezquerra A."/>
        </authorList>
    </citation>
    <scope>NUCLEOTIDE SEQUENCE [MRNA]</scope>
</reference>
<name>CCL4_PIG</name>
<keyword id="KW-0145">Chemotaxis</keyword>
<keyword id="KW-0202">Cytokine</keyword>
<keyword id="KW-1015">Disulfide bond</keyword>
<keyword id="KW-0395">Inflammatory response</keyword>
<keyword id="KW-1185">Reference proteome</keyword>
<keyword id="KW-0964">Secreted</keyword>
<keyword id="KW-0732">Signal</keyword>
<gene>
    <name type="primary">CCL4</name>
    <name type="synonym">MIP1B</name>
    <name type="synonym">SCY4A</name>
</gene>
<evidence type="ECO:0000250" key="1"/>
<evidence type="ECO:0000305" key="2"/>
<feature type="signal peptide" evidence="1">
    <location>
        <begin position="1"/>
        <end position="23"/>
    </location>
</feature>
<feature type="chain" id="PRO_0000326238" description="C-C motif chemokine 4">
    <location>
        <begin position="24"/>
        <end position="92"/>
    </location>
</feature>
<feature type="disulfide bond" evidence="1">
    <location>
        <begin position="34"/>
        <end position="58"/>
    </location>
</feature>
<feature type="disulfide bond" evidence="1">
    <location>
        <begin position="35"/>
        <end position="74"/>
    </location>
</feature>
<protein>
    <recommendedName>
        <fullName>C-C motif chemokine 4</fullName>
    </recommendedName>
    <alternativeName>
        <fullName>Macrophage inflammatory protein 1-beta</fullName>
        <shortName>MIP-1-beta</shortName>
    </alternativeName>
    <alternativeName>
        <fullName>Small-inducible cytokine A4</fullName>
    </alternativeName>
</protein>
<proteinExistence type="inferred from homology"/>
<sequence>MKLCVTVLSLLVLVAAFCSPALSAPMGSDPPTSCCFTYTVRKLPRNFVTDYYETSSLCSQPAVVFQTKKGRQVCANPSDDWVQEYMDDLELN</sequence>
<dbReference type="EMBL" id="AJ311717">
    <property type="protein sequence ID" value="CAC84398.1"/>
    <property type="molecule type" value="mRNA"/>
</dbReference>
<dbReference type="RefSeq" id="NP_998944.1">
    <property type="nucleotide sequence ID" value="NM_213779.1"/>
</dbReference>
<dbReference type="SMR" id="Q711P4"/>
<dbReference type="FunCoup" id="Q711P4">
    <property type="interactions" value="159"/>
</dbReference>
<dbReference type="STRING" id="9823.ENSSSCP00000067744"/>
<dbReference type="PaxDb" id="9823-ENSSSCP00000018754"/>
<dbReference type="Ensembl" id="ENSSSCT00000065828.3">
    <property type="protein sequence ID" value="ENSSSCP00000044877.2"/>
    <property type="gene ID" value="ENSSSCG00000032343.3"/>
</dbReference>
<dbReference type="Ensembl" id="ENSSSCT00015086093.1">
    <property type="protein sequence ID" value="ENSSSCP00015035005.1"/>
    <property type="gene ID" value="ENSSSCG00015064105.1"/>
</dbReference>
<dbReference type="Ensembl" id="ENSSSCT00025028468.1">
    <property type="protein sequence ID" value="ENSSSCP00025012057.1"/>
    <property type="gene ID" value="ENSSSCG00025020949.1"/>
</dbReference>
<dbReference type="Ensembl" id="ENSSSCT00040105767.1">
    <property type="protein sequence ID" value="ENSSSCP00040048521.1"/>
    <property type="gene ID" value="ENSSSCG00040076033.1"/>
</dbReference>
<dbReference type="Ensembl" id="ENSSSCT00070012324.1">
    <property type="protein sequence ID" value="ENSSSCP00070010134.1"/>
    <property type="gene ID" value="ENSSSCG00070006440.1"/>
</dbReference>
<dbReference type="Ensembl" id="ENSSSCT00085039845">
    <property type="protein sequence ID" value="ENSSSCP00085027699"/>
    <property type="gene ID" value="ENSSSCG00085020989"/>
</dbReference>
<dbReference type="Ensembl" id="ENSSSCT00090013138">
    <property type="protein sequence ID" value="ENSSSCP00090008391"/>
    <property type="gene ID" value="ENSSSCG00090007382"/>
</dbReference>
<dbReference type="Ensembl" id="ENSSSCT00105027721">
    <property type="protein sequence ID" value="ENSSSCP00105019559"/>
    <property type="gene ID" value="ENSSSCG00105014214"/>
</dbReference>
<dbReference type="Ensembl" id="ENSSSCT00110060360">
    <property type="protein sequence ID" value="ENSSSCP00110042197"/>
    <property type="gene ID" value="ENSSSCG00110031580"/>
</dbReference>
<dbReference type="Ensembl" id="ENSSSCT00115014486">
    <property type="protein sequence ID" value="ENSSSCP00115013682"/>
    <property type="gene ID" value="ENSSSCG00115008289"/>
</dbReference>
<dbReference type="GeneID" id="396668"/>
<dbReference type="KEGG" id="ssc:396668"/>
<dbReference type="CTD" id="6351"/>
<dbReference type="eggNOG" id="ENOG502S8M4">
    <property type="taxonomic scope" value="Eukaryota"/>
</dbReference>
<dbReference type="GeneTree" id="ENSGT00940000165089"/>
<dbReference type="HOGENOM" id="CLU_141716_4_0_1"/>
<dbReference type="InParanoid" id="Q711P4"/>
<dbReference type="OMA" id="WVQEYME"/>
<dbReference type="OrthoDB" id="9447832at2759"/>
<dbReference type="TreeFam" id="TF334888"/>
<dbReference type="Reactome" id="R-SSC-380108">
    <property type="pathway name" value="Chemokine receptors bind chemokines"/>
</dbReference>
<dbReference type="Reactome" id="R-SSC-418594">
    <property type="pathway name" value="G alpha (i) signalling events"/>
</dbReference>
<dbReference type="Proteomes" id="UP000008227">
    <property type="component" value="Chromosome 12"/>
</dbReference>
<dbReference type="Proteomes" id="UP000314985">
    <property type="component" value="Chromosome 12"/>
</dbReference>
<dbReference type="Proteomes" id="UP000694570">
    <property type="component" value="Unplaced"/>
</dbReference>
<dbReference type="Proteomes" id="UP000694571">
    <property type="component" value="Unplaced"/>
</dbReference>
<dbReference type="Proteomes" id="UP000694720">
    <property type="component" value="Unplaced"/>
</dbReference>
<dbReference type="Proteomes" id="UP000694722">
    <property type="component" value="Unplaced"/>
</dbReference>
<dbReference type="Proteomes" id="UP000694723">
    <property type="component" value="Unplaced"/>
</dbReference>
<dbReference type="Proteomes" id="UP000694724">
    <property type="component" value="Unplaced"/>
</dbReference>
<dbReference type="Proteomes" id="UP000694725">
    <property type="component" value="Unplaced"/>
</dbReference>
<dbReference type="Proteomes" id="UP000694726">
    <property type="component" value="Unplaced"/>
</dbReference>
<dbReference type="Proteomes" id="UP000694727">
    <property type="component" value="Unplaced"/>
</dbReference>
<dbReference type="Proteomes" id="UP000694728">
    <property type="component" value="Unplaced"/>
</dbReference>
<dbReference type="Bgee" id="ENSSSCG00000032343">
    <property type="expression patterns" value="Expressed in right lobe of liver and 31 other cell types or tissues"/>
</dbReference>
<dbReference type="ExpressionAtlas" id="Q711P4">
    <property type="expression patterns" value="baseline and differential"/>
</dbReference>
<dbReference type="GO" id="GO:0005615">
    <property type="term" value="C:extracellular space"/>
    <property type="evidence" value="ECO:0000318"/>
    <property type="project" value="GO_Central"/>
</dbReference>
<dbReference type="GO" id="GO:0048020">
    <property type="term" value="F:CCR chemokine receptor binding"/>
    <property type="evidence" value="ECO:0000318"/>
    <property type="project" value="GO_Central"/>
</dbReference>
<dbReference type="GO" id="GO:0008009">
    <property type="term" value="F:chemokine activity"/>
    <property type="evidence" value="ECO:0000318"/>
    <property type="project" value="GO_Central"/>
</dbReference>
<dbReference type="GO" id="GO:0061844">
    <property type="term" value="P:antimicrobial humoral immune response mediated by antimicrobial peptide"/>
    <property type="evidence" value="ECO:0000318"/>
    <property type="project" value="GO_Central"/>
</dbReference>
<dbReference type="GO" id="GO:0070098">
    <property type="term" value="P:chemokine-mediated signaling pathway"/>
    <property type="evidence" value="ECO:0000318"/>
    <property type="project" value="GO_Central"/>
</dbReference>
<dbReference type="GO" id="GO:0048245">
    <property type="term" value="P:eosinophil chemotaxis"/>
    <property type="evidence" value="ECO:0000318"/>
    <property type="project" value="GO_Central"/>
</dbReference>
<dbReference type="GO" id="GO:0006954">
    <property type="term" value="P:inflammatory response"/>
    <property type="evidence" value="ECO:0000318"/>
    <property type="project" value="GO_Central"/>
</dbReference>
<dbReference type="GO" id="GO:0030335">
    <property type="term" value="P:positive regulation of cell migration"/>
    <property type="evidence" value="ECO:0000318"/>
    <property type="project" value="GO_Central"/>
</dbReference>
<dbReference type="CDD" id="cd00272">
    <property type="entry name" value="Chemokine_CC"/>
    <property type="match status" value="1"/>
</dbReference>
<dbReference type="FunFam" id="2.40.50.40:FF:000002">
    <property type="entry name" value="C-C motif chemokine"/>
    <property type="match status" value="1"/>
</dbReference>
<dbReference type="Gene3D" id="2.40.50.40">
    <property type="match status" value="1"/>
</dbReference>
<dbReference type="InterPro" id="IPR039809">
    <property type="entry name" value="Chemokine_b/g/d"/>
</dbReference>
<dbReference type="InterPro" id="IPR000827">
    <property type="entry name" value="Chemokine_CC_CS"/>
</dbReference>
<dbReference type="InterPro" id="IPR001811">
    <property type="entry name" value="Chemokine_IL8-like_dom"/>
</dbReference>
<dbReference type="InterPro" id="IPR036048">
    <property type="entry name" value="Interleukin_8-like_sf"/>
</dbReference>
<dbReference type="PANTHER" id="PTHR12015:SF103">
    <property type="entry name" value="C-C MOTIF CHEMOKINE 4-RELATED"/>
    <property type="match status" value="1"/>
</dbReference>
<dbReference type="PANTHER" id="PTHR12015">
    <property type="entry name" value="SMALL INDUCIBLE CYTOKINE A"/>
    <property type="match status" value="1"/>
</dbReference>
<dbReference type="Pfam" id="PF00048">
    <property type="entry name" value="IL8"/>
    <property type="match status" value="1"/>
</dbReference>
<dbReference type="SMART" id="SM00199">
    <property type="entry name" value="SCY"/>
    <property type="match status" value="1"/>
</dbReference>
<dbReference type="SUPFAM" id="SSF54117">
    <property type="entry name" value="Interleukin 8-like chemokines"/>
    <property type="match status" value="1"/>
</dbReference>
<dbReference type="PROSITE" id="PS00472">
    <property type="entry name" value="SMALL_CYTOKINES_CC"/>
    <property type="match status" value="1"/>
</dbReference>
<organism>
    <name type="scientific">Sus scrofa</name>
    <name type="common">Pig</name>
    <dbReference type="NCBI Taxonomy" id="9823"/>
    <lineage>
        <taxon>Eukaryota</taxon>
        <taxon>Metazoa</taxon>
        <taxon>Chordata</taxon>
        <taxon>Craniata</taxon>
        <taxon>Vertebrata</taxon>
        <taxon>Euteleostomi</taxon>
        <taxon>Mammalia</taxon>
        <taxon>Eutheria</taxon>
        <taxon>Laurasiatheria</taxon>
        <taxon>Artiodactyla</taxon>
        <taxon>Suina</taxon>
        <taxon>Suidae</taxon>
        <taxon>Sus</taxon>
    </lineage>
</organism>
<comment type="function">
    <text evidence="1">Monokine with inflammatory and chemokinetic properties.</text>
</comment>
<comment type="subunit">
    <text evidence="1">Homodimer. Interacts with CCR5 (By similarity).</text>
</comment>
<comment type="subcellular location">
    <subcellularLocation>
        <location evidence="1">Secreted</location>
    </subcellularLocation>
</comment>
<comment type="similarity">
    <text evidence="2">Belongs to the intercrine beta (chemokine CC) family.</text>
</comment>
<accession>Q711P4</accession>